<reference key="1">
    <citation type="journal article" date="2003" name="Science">
        <title>Genome of Geobacter sulfurreducens: metal reduction in subsurface environments.</title>
        <authorList>
            <person name="Methe B.A."/>
            <person name="Nelson K.E."/>
            <person name="Eisen J.A."/>
            <person name="Paulsen I.T."/>
            <person name="Nelson W.C."/>
            <person name="Heidelberg J.F."/>
            <person name="Wu D."/>
            <person name="Wu M."/>
            <person name="Ward N.L."/>
            <person name="Beanan M.J."/>
            <person name="Dodson R.J."/>
            <person name="Madupu R."/>
            <person name="Brinkac L.M."/>
            <person name="Daugherty S.C."/>
            <person name="DeBoy R.T."/>
            <person name="Durkin A.S."/>
            <person name="Gwinn M.L."/>
            <person name="Kolonay J.F."/>
            <person name="Sullivan S.A."/>
            <person name="Haft D.H."/>
            <person name="Selengut J."/>
            <person name="Davidsen T.M."/>
            <person name="Zafar N."/>
            <person name="White O."/>
            <person name="Tran B."/>
            <person name="Romero C."/>
            <person name="Forberger H.A."/>
            <person name="Weidman J.F."/>
            <person name="Khouri H.M."/>
            <person name="Feldblyum T.V."/>
            <person name="Utterback T.R."/>
            <person name="Van Aken S.E."/>
            <person name="Lovley D.R."/>
            <person name="Fraser C.M."/>
        </authorList>
    </citation>
    <scope>NUCLEOTIDE SEQUENCE [LARGE SCALE GENOMIC DNA]</scope>
    <source>
        <strain>ATCC 51573 / DSM 12127 / PCA</strain>
    </source>
</reference>
<proteinExistence type="inferred from homology"/>
<keyword id="KW-0028">Amino-acid biosynthesis</keyword>
<keyword id="KW-0067">ATP-binding</keyword>
<keyword id="KW-0963">Cytoplasm</keyword>
<keyword id="KW-0368">Histidine biosynthesis</keyword>
<keyword id="KW-0378">Hydrolase</keyword>
<keyword id="KW-0547">Nucleotide-binding</keyword>
<keyword id="KW-1185">Reference proteome</keyword>
<comment type="catalytic activity">
    <reaction evidence="1">
        <text>1-(5-phospho-beta-D-ribosyl)-ATP + H2O = 1-(5-phospho-beta-D-ribosyl)-5'-AMP + diphosphate + H(+)</text>
        <dbReference type="Rhea" id="RHEA:22828"/>
        <dbReference type="ChEBI" id="CHEBI:15377"/>
        <dbReference type="ChEBI" id="CHEBI:15378"/>
        <dbReference type="ChEBI" id="CHEBI:33019"/>
        <dbReference type="ChEBI" id="CHEBI:59457"/>
        <dbReference type="ChEBI" id="CHEBI:73183"/>
        <dbReference type="EC" id="3.6.1.31"/>
    </reaction>
</comment>
<comment type="pathway">
    <text evidence="1">Amino-acid biosynthesis; L-histidine biosynthesis; L-histidine from 5-phospho-alpha-D-ribose 1-diphosphate: step 2/9.</text>
</comment>
<comment type="subcellular location">
    <subcellularLocation>
        <location evidence="1">Cytoplasm</location>
    </subcellularLocation>
</comment>
<comment type="similarity">
    <text evidence="1">Belongs to the PRA-PH family.</text>
</comment>
<protein>
    <recommendedName>
        <fullName evidence="1">Phosphoribosyl-ATP pyrophosphatase</fullName>
        <shortName evidence="1">PRA-PH</shortName>
        <ecNumber evidence="1">3.6.1.31</ecNumber>
    </recommendedName>
</protein>
<sequence length="108" mass="12103">MNERDDILQAVYEVILDRKGALPESSYTASLFHKGIDKILKKVGEEATEVIIAGKGGKREEIVYETADLLFHTLVLLGHYDIAPADVYNELRRRFGTSGHAEKASRNE</sequence>
<dbReference type="EC" id="3.6.1.31" evidence="1"/>
<dbReference type="EMBL" id="AE017180">
    <property type="protein sequence ID" value="AAR36485.1"/>
    <property type="molecule type" value="Genomic_DNA"/>
</dbReference>
<dbReference type="RefSeq" id="NP_954135.1">
    <property type="nucleotide sequence ID" value="NC_002939.5"/>
</dbReference>
<dbReference type="RefSeq" id="WP_010943715.1">
    <property type="nucleotide sequence ID" value="NC_002939.5"/>
</dbReference>
<dbReference type="SMR" id="P60536"/>
<dbReference type="STRING" id="243231.GSU3094"/>
<dbReference type="EnsemblBacteria" id="AAR36485">
    <property type="protein sequence ID" value="AAR36485"/>
    <property type="gene ID" value="GSU3094"/>
</dbReference>
<dbReference type="KEGG" id="gsu:GSU3094"/>
<dbReference type="PATRIC" id="fig|243231.5.peg.3118"/>
<dbReference type="eggNOG" id="COG0140">
    <property type="taxonomic scope" value="Bacteria"/>
</dbReference>
<dbReference type="HOGENOM" id="CLU_123337_1_2_7"/>
<dbReference type="InParanoid" id="P60536"/>
<dbReference type="OrthoDB" id="9795769at2"/>
<dbReference type="UniPathway" id="UPA00031">
    <property type="reaction ID" value="UER00007"/>
</dbReference>
<dbReference type="Proteomes" id="UP000000577">
    <property type="component" value="Chromosome"/>
</dbReference>
<dbReference type="GO" id="GO:0005737">
    <property type="term" value="C:cytoplasm"/>
    <property type="evidence" value="ECO:0007669"/>
    <property type="project" value="UniProtKB-SubCell"/>
</dbReference>
<dbReference type="GO" id="GO:0005524">
    <property type="term" value="F:ATP binding"/>
    <property type="evidence" value="ECO:0007669"/>
    <property type="project" value="UniProtKB-KW"/>
</dbReference>
<dbReference type="GO" id="GO:0004636">
    <property type="term" value="F:phosphoribosyl-ATP diphosphatase activity"/>
    <property type="evidence" value="ECO:0007669"/>
    <property type="project" value="UniProtKB-UniRule"/>
</dbReference>
<dbReference type="GO" id="GO:0000105">
    <property type="term" value="P:L-histidine biosynthetic process"/>
    <property type="evidence" value="ECO:0007669"/>
    <property type="project" value="UniProtKB-UniRule"/>
</dbReference>
<dbReference type="CDD" id="cd11534">
    <property type="entry name" value="NTP-PPase_HisIE_like"/>
    <property type="match status" value="1"/>
</dbReference>
<dbReference type="Gene3D" id="1.10.287.1080">
    <property type="entry name" value="MazG-like"/>
    <property type="match status" value="1"/>
</dbReference>
<dbReference type="HAMAP" id="MF_01020">
    <property type="entry name" value="HisE"/>
    <property type="match status" value="1"/>
</dbReference>
<dbReference type="InterPro" id="IPR008179">
    <property type="entry name" value="HisE"/>
</dbReference>
<dbReference type="InterPro" id="IPR021130">
    <property type="entry name" value="PRib-ATP_PPHydrolase-like"/>
</dbReference>
<dbReference type="NCBIfam" id="TIGR03188">
    <property type="entry name" value="histidine_hisI"/>
    <property type="match status" value="1"/>
</dbReference>
<dbReference type="NCBIfam" id="NF001611">
    <property type="entry name" value="PRK00400.1-3"/>
    <property type="match status" value="1"/>
</dbReference>
<dbReference type="PANTHER" id="PTHR42945">
    <property type="entry name" value="HISTIDINE BIOSYNTHESIS BIFUNCTIONAL PROTEIN"/>
    <property type="match status" value="1"/>
</dbReference>
<dbReference type="PANTHER" id="PTHR42945:SF9">
    <property type="entry name" value="HISTIDINE BIOSYNTHESIS BIFUNCTIONAL PROTEIN HISIE"/>
    <property type="match status" value="1"/>
</dbReference>
<dbReference type="Pfam" id="PF01503">
    <property type="entry name" value="PRA-PH"/>
    <property type="match status" value="1"/>
</dbReference>
<dbReference type="SUPFAM" id="SSF101386">
    <property type="entry name" value="all-alpha NTP pyrophosphatases"/>
    <property type="match status" value="1"/>
</dbReference>
<feature type="chain" id="PRO_0000136362" description="Phosphoribosyl-ATP pyrophosphatase">
    <location>
        <begin position="1"/>
        <end position="108"/>
    </location>
</feature>
<gene>
    <name evidence="1" type="primary">hisE</name>
    <name type="ordered locus">GSU3094</name>
</gene>
<evidence type="ECO:0000255" key="1">
    <source>
        <dbReference type="HAMAP-Rule" id="MF_01020"/>
    </source>
</evidence>
<name>HIS2_GEOSL</name>
<accession>P60536</accession>
<organism>
    <name type="scientific">Geobacter sulfurreducens (strain ATCC 51573 / DSM 12127 / PCA)</name>
    <dbReference type="NCBI Taxonomy" id="243231"/>
    <lineage>
        <taxon>Bacteria</taxon>
        <taxon>Pseudomonadati</taxon>
        <taxon>Thermodesulfobacteriota</taxon>
        <taxon>Desulfuromonadia</taxon>
        <taxon>Geobacterales</taxon>
        <taxon>Geobacteraceae</taxon>
        <taxon>Geobacter</taxon>
    </lineage>
</organism>